<protein>
    <recommendedName>
        <fullName>Putative uncharacterized protein YBR116C</fullName>
    </recommendedName>
</protein>
<feature type="chain" id="PRO_0000202488" description="Putative uncharacterized protein YBR116C">
    <location>
        <begin position="1"/>
        <end position="175"/>
    </location>
</feature>
<feature type="transmembrane region" description="Helical" evidence="1">
    <location>
        <begin position="143"/>
        <end position="166"/>
    </location>
</feature>
<keyword id="KW-0472">Membrane</keyword>
<keyword id="KW-0346">Stress response</keyword>
<keyword id="KW-0812">Transmembrane</keyword>
<keyword id="KW-1133">Transmembrane helix</keyword>
<organism>
    <name type="scientific">Saccharomyces cerevisiae (strain ATCC 204508 / S288c)</name>
    <name type="common">Baker's yeast</name>
    <dbReference type="NCBI Taxonomy" id="559292"/>
    <lineage>
        <taxon>Eukaryota</taxon>
        <taxon>Fungi</taxon>
        <taxon>Dikarya</taxon>
        <taxon>Ascomycota</taxon>
        <taxon>Saccharomycotina</taxon>
        <taxon>Saccharomycetes</taxon>
        <taxon>Saccharomycetales</taxon>
        <taxon>Saccharomycetaceae</taxon>
        <taxon>Saccharomyces</taxon>
    </lineage>
</organism>
<comment type="subcellular location">
    <subcellularLocation>
        <location evidence="5">Membrane</location>
        <topology evidence="5">Single-pass membrane protein</topology>
    </subcellularLocation>
</comment>
<comment type="induction">
    <text evidence="2 3 4">Highly induced during the diauxic shift or during carbon-limited growth, and also induced by mild heat stress.</text>
</comment>
<comment type="miscellaneous">
    <text evidence="5">Partially overlaps TKL2.</text>
</comment>
<comment type="caution">
    <text evidence="6">Product of a dubious gene prediction unlikely to encode a functional protein. Because of that it is not part of the S.cerevisiae S288c complete/reference proteome set.</text>
</comment>
<accession>P38268</accession>
<dbReference type="EMBL" id="X78993">
    <property type="protein sequence ID" value="CAA55618.1"/>
    <property type="molecule type" value="Genomic_DNA"/>
</dbReference>
<dbReference type="EMBL" id="Z35985">
    <property type="protein sequence ID" value="CAA85073.1"/>
    <property type="molecule type" value="Genomic_DNA"/>
</dbReference>
<dbReference type="EMBL" id="AY693259">
    <property type="protein sequence ID" value="AAT93278.1"/>
    <property type="molecule type" value="Genomic_DNA"/>
</dbReference>
<dbReference type="PIR" id="S48280">
    <property type="entry name" value="S48280"/>
</dbReference>
<dbReference type="DIP" id="DIP-2743N"/>
<dbReference type="IntAct" id="P38268">
    <property type="interactions" value="1"/>
</dbReference>
<dbReference type="MINT" id="P38268"/>
<dbReference type="STRING" id="4932.YBR116C"/>
<dbReference type="PaxDb" id="4932-YBR116C"/>
<dbReference type="EnsemblFungi" id="YBR116C_mRNA">
    <property type="protein sequence ID" value="YBR116C"/>
    <property type="gene ID" value="YBR116C"/>
</dbReference>
<dbReference type="AGR" id="SGD:S000000320"/>
<dbReference type="SGD" id="S000000320">
    <property type="gene designation" value="YBR116C"/>
</dbReference>
<dbReference type="HOGENOM" id="CLU_1533775_0_0_1"/>
<dbReference type="GO" id="GO:0016020">
    <property type="term" value="C:membrane"/>
    <property type="evidence" value="ECO:0007669"/>
    <property type="project" value="UniProtKB-SubCell"/>
</dbReference>
<sequence length="175" mass="20215">MQPKNCTILKKSKQELFPCQTFILLTGKVKNTDSLFYQTVFRSCPLKYWLLQAGVSMLINRSDSTNLVVQARGLKFTNCSISQRTVLRQGLKRQSITTKESSCFLLWEELSKSEEVNSSLLFHTSWLMVTCCLKYIYMYDICTCFLFCAFVTSIFIETDYSIFFLLTASRGIAQF</sequence>
<reference key="1">
    <citation type="journal article" date="1994" name="Yeast">
        <title>Analysis of a 70 kb region on the right arm of yeast chromosome II.</title>
        <authorList>
            <person name="Mannhaupt G."/>
            <person name="Stucka R."/>
            <person name="Ehnle S."/>
            <person name="Vetter I."/>
            <person name="Feldmann H."/>
        </authorList>
    </citation>
    <scope>NUCLEOTIDE SEQUENCE [GENOMIC DNA]</scope>
    <source>
        <strain>ATCC 204508 / S288c</strain>
    </source>
</reference>
<reference key="2">
    <citation type="journal article" date="1994" name="EMBO J.">
        <title>Complete DNA sequence of yeast chromosome II.</title>
        <authorList>
            <person name="Feldmann H."/>
            <person name="Aigle M."/>
            <person name="Aljinovic G."/>
            <person name="Andre B."/>
            <person name="Baclet M.C."/>
            <person name="Barthe C."/>
            <person name="Baur A."/>
            <person name="Becam A.-M."/>
            <person name="Biteau N."/>
            <person name="Boles E."/>
            <person name="Brandt T."/>
            <person name="Brendel M."/>
            <person name="Brueckner M."/>
            <person name="Bussereau F."/>
            <person name="Christiansen C."/>
            <person name="Contreras R."/>
            <person name="Crouzet M."/>
            <person name="Cziepluch C."/>
            <person name="Demolis N."/>
            <person name="Delaveau T."/>
            <person name="Doignon F."/>
            <person name="Domdey H."/>
            <person name="Duesterhus S."/>
            <person name="Dubois E."/>
            <person name="Dujon B."/>
            <person name="El Bakkoury M."/>
            <person name="Entian K.-D."/>
            <person name="Feuermann M."/>
            <person name="Fiers W."/>
            <person name="Fobo G.M."/>
            <person name="Fritz C."/>
            <person name="Gassenhuber J."/>
            <person name="Glansdorff N."/>
            <person name="Goffeau A."/>
            <person name="Grivell L.A."/>
            <person name="de Haan M."/>
            <person name="Hein C."/>
            <person name="Herbert C.J."/>
            <person name="Hollenberg C.P."/>
            <person name="Holmstroem K."/>
            <person name="Jacq C."/>
            <person name="Jacquet M."/>
            <person name="Jauniaux J.-C."/>
            <person name="Jonniaux J.-L."/>
            <person name="Kallesoee T."/>
            <person name="Kiesau P."/>
            <person name="Kirchrath L."/>
            <person name="Koetter P."/>
            <person name="Korol S."/>
            <person name="Liebl S."/>
            <person name="Logghe M."/>
            <person name="Lohan A.J.E."/>
            <person name="Louis E.J."/>
            <person name="Li Z.Y."/>
            <person name="Maat M.J."/>
            <person name="Mallet L."/>
            <person name="Mannhaupt G."/>
            <person name="Messenguy F."/>
            <person name="Miosga T."/>
            <person name="Molemans F."/>
            <person name="Mueller S."/>
            <person name="Nasr F."/>
            <person name="Obermaier B."/>
            <person name="Perea J."/>
            <person name="Pierard A."/>
            <person name="Piravandi E."/>
            <person name="Pohl F.M."/>
            <person name="Pohl T.M."/>
            <person name="Potier S."/>
            <person name="Proft M."/>
            <person name="Purnelle B."/>
            <person name="Ramezani Rad M."/>
            <person name="Rieger M."/>
            <person name="Rose M."/>
            <person name="Schaaff-Gerstenschlaeger I."/>
            <person name="Scherens B."/>
            <person name="Schwarzlose C."/>
            <person name="Skala J."/>
            <person name="Slonimski P.P."/>
            <person name="Smits P.H.M."/>
            <person name="Souciet J.-L."/>
            <person name="Steensma H.Y."/>
            <person name="Stucka R."/>
            <person name="Urrestarazu L.A."/>
            <person name="van der Aart Q.J.M."/>
            <person name="Van Dyck L."/>
            <person name="Vassarotti A."/>
            <person name="Vetter I."/>
            <person name="Vierendeels F."/>
            <person name="Vissers S."/>
            <person name="Wagner G."/>
            <person name="de Wergifosse P."/>
            <person name="Wolfe K.H."/>
            <person name="Zagulski M."/>
            <person name="Zimmermann F.K."/>
            <person name="Mewes H.-W."/>
            <person name="Kleine K."/>
        </authorList>
    </citation>
    <scope>NUCLEOTIDE SEQUENCE [LARGE SCALE GENOMIC DNA]</scope>
    <source>
        <strain>ATCC 204508 / S288c</strain>
    </source>
</reference>
<reference key="3">
    <citation type="journal article" date="2014" name="G3 (Bethesda)">
        <title>The reference genome sequence of Saccharomyces cerevisiae: Then and now.</title>
        <authorList>
            <person name="Engel S.R."/>
            <person name="Dietrich F.S."/>
            <person name="Fisk D.G."/>
            <person name="Binkley G."/>
            <person name="Balakrishnan R."/>
            <person name="Costanzo M.C."/>
            <person name="Dwight S.S."/>
            <person name="Hitz B.C."/>
            <person name="Karra K."/>
            <person name="Nash R.S."/>
            <person name="Weng S."/>
            <person name="Wong E.D."/>
            <person name="Lloyd P."/>
            <person name="Skrzypek M.S."/>
            <person name="Miyasato S.R."/>
            <person name="Simison M."/>
            <person name="Cherry J.M."/>
        </authorList>
    </citation>
    <scope>GENOME REANNOTATION</scope>
    <source>
        <strain>ATCC 204508 / S288c</strain>
    </source>
</reference>
<reference key="4">
    <citation type="journal article" date="2007" name="Genome Res.">
        <title>Approaching a complete repository of sequence-verified protein-encoding clones for Saccharomyces cerevisiae.</title>
        <authorList>
            <person name="Hu Y."/>
            <person name="Rolfs A."/>
            <person name="Bhullar B."/>
            <person name="Murthy T.V.S."/>
            <person name="Zhu C."/>
            <person name="Berger M.F."/>
            <person name="Camargo A.A."/>
            <person name="Kelley F."/>
            <person name="McCarron S."/>
            <person name="Jepson D."/>
            <person name="Richardson A."/>
            <person name="Raphael J."/>
            <person name="Moreira D."/>
            <person name="Taycher E."/>
            <person name="Zuo D."/>
            <person name="Mohr S."/>
            <person name="Kane M.F."/>
            <person name="Williamson J."/>
            <person name="Simpson A.J.G."/>
            <person name="Bulyk M.L."/>
            <person name="Harlow E."/>
            <person name="Marsischky G."/>
            <person name="Kolodner R.D."/>
            <person name="LaBaer J."/>
        </authorList>
    </citation>
    <scope>NUCLEOTIDE SEQUENCE [GENOMIC DNA]</scope>
    <source>
        <strain>ATCC 204508 / S288c</strain>
    </source>
</reference>
<reference key="5">
    <citation type="journal article" date="1998" name="Cell">
        <title>Dissecting the regulatory circuitry of a eukaryotic genome.</title>
        <authorList>
            <person name="Holstege F.C.P."/>
            <person name="Jennings E.G."/>
            <person name="Wyrick J.J."/>
            <person name="Lee T.I."/>
            <person name="Hengartner C.J."/>
            <person name="Green M.R."/>
            <person name="Golub T.R."/>
            <person name="Lander E.S."/>
            <person name="Young R.A."/>
        </authorList>
    </citation>
    <scope>INDUCTION</scope>
</reference>
<reference key="6">
    <citation type="journal article" date="2003" name="J. Biochem.">
        <title>Response of genes associated with mitochondrial function to mild heat stress in yeast Saccharomyces cerevisiae.</title>
        <authorList>
            <person name="Sakaki K."/>
            <person name="Tashiro K."/>
            <person name="Kuhara S."/>
            <person name="Mihara K."/>
        </authorList>
    </citation>
    <scope>INDUCTION</scope>
</reference>
<reference key="7">
    <citation type="journal article" date="2003" name="J. Biol. Chem.">
        <title>The genome-wide transcriptional responses of Saccharomyces cerevisiae grown on glucose in aerobic chemostat cultures limited for carbon, nitrogen, phosphorus, or sulfur.</title>
        <authorList>
            <person name="Boer V.M."/>
            <person name="de Winde J.H."/>
            <person name="Pronk J.T."/>
            <person name="Piper M.D.W."/>
        </authorList>
    </citation>
    <scope>INDUCTION</scope>
</reference>
<proteinExistence type="uncertain"/>
<name>YBW6_YEAST</name>
<gene>
    <name type="ordered locus">YBR116C</name>
    <name type="ORF">YBR0911</name>
</gene>
<evidence type="ECO:0000255" key="1"/>
<evidence type="ECO:0000269" key="2">
    <source>
    </source>
</evidence>
<evidence type="ECO:0000269" key="3">
    <source>
    </source>
</evidence>
<evidence type="ECO:0000269" key="4">
    <source>
    </source>
</evidence>
<evidence type="ECO:0000305" key="5"/>
<evidence type="ECO:0000305" key="6">
    <source>
    </source>
</evidence>